<sequence>MTQQAANALPPVARTYQVRTYGCQMNVHDSERLAGLLEDAGYRRAADGADADVVVFNTCAVRENADNKLYGNLSHLAPRKRSEPQMQIAVGGCLAQKDRDAVLRRAPWVDVVFGTHNIGSLPTLLERARHNRAAQVEIAEALQEFPSTLPAARESAYAGWVSISVGCNNTCTFCIVPSLRGKEVDRRPGDVLAEIQTLVDQGVLEVTLLGQNVNAYGVSFAADERLREDPRMWQSAPHRNRGAFAELLRACGRIDGLERVRFTSPHPAEFTDDVIEAMAETPNVCPALHMPLQSGSDRILRAMRRSYRAEKYLGIIDRVRAAIPDAAITTDLIVGFPGETEEDFQATLDVVAASRFSSAFTFQYSKRPGTPAADMPGQLPKAVVSERYQRLIELQERISLEENQAQVGRTLELLVATGEGRKDAATARLSGRARDGRLVHFAPGAAADEPLARRAFDQVRPGDVVTTTVTGAAPHHLIADGALLTHRRTRAGDAHAAGLRPRTGVGLGIPGVGAPAPAPVTTGCAL</sequence>
<protein>
    <recommendedName>
        <fullName evidence="1">tRNA-2-methylthio-N(6)-dimethylallyladenosine synthase</fullName>
        <ecNumber evidence="1">2.8.4.3</ecNumber>
    </recommendedName>
    <alternativeName>
        <fullName evidence="1">(Dimethylallyl)adenosine tRNA methylthiotransferase MiaB</fullName>
    </alternativeName>
    <alternativeName>
        <fullName evidence="1">tRNA-i(6)A37 methylthiotransferase</fullName>
    </alternativeName>
</protein>
<proteinExistence type="inferred from homology"/>
<comment type="function">
    <text evidence="1">Catalyzes the methylthiolation of N6-(dimethylallyl)adenosine (i(6)A), leading to the formation of 2-methylthio-N6-(dimethylallyl)adenosine (ms(2)i(6)A) at position 37 in tRNAs that read codons beginning with uridine.</text>
</comment>
<comment type="catalytic activity">
    <reaction evidence="1">
        <text>N(6)-dimethylallyladenosine(37) in tRNA + (sulfur carrier)-SH + AH2 + 2 S-adenosyl-L-methionine = 2-methylsulfanyl-N(6)-dimethylallyladenosine(37) in tRNA + (sulfur carrier)-H + 5'-deoxyadenosine + L-methionine + A + S-adenosyl-L-homocysteine + 2 H(+)</text>
        <dbReference type="Rhea" id="RHEA:37067"/>
        <dbReference type="Rhea" id="RHEA-COMP:10375"/>
        <dbReference type="Rhea" id="RHEA-COMP:10376"/>
        <dbReference type="Rhea" id="RHEA-COMP:14737"/>
        <dbReference type="Rhea" id="RHEA-COMP:14739"/>
        <dbReference type="ChEBI" id="CHEBI:13193"/>
        <dbReference type="ChEBI" id="CHEBI:15378"/>
        <dbReference type="ChEBI" id="CHEBI:17319"/>
        <dbReference type="ChEBI" id="CHEBI:17499"/>
        <dbReference type="ChEBI" id="CHEBI:29917"/>
        <dbReference type="ChEBI" id="CHEBI:57844"/>
        <dbReference type="ChEBI" id="CHEBI:57856"/>
        <dbReference type="ChEBI" id="CHEBI:59789"/>
        <dbReference type="ChEBI" id="CHEBI:64428"/>
        <dbReference type="ChEBI" id="CHEBI:74415"/>
        <dbReference type="ChEBI" id="CHEBI:74417"/>
        <dbReference type="EC" id="2.8.4.3"/>
    </reaction>
</comment>
<comment type="cofactor">
    <cofactor evidence="1">
        <name>[4Fe-4S] cluster</name>
        <dbReference type="ChEBI" id="CHEBI:49883"/>
    </cofactor>
    <text evidence="1">Binds 2 [4Fe-4S] clusters. One cluster is coordinated with 3 cysteines and an exchangeable S-adenosyl-L-methionine.</text>
</comment>
<comment type="subunit">
    <text evidence="1">Monomer.</text>
</comment>
<comment type="subcellular location">
    <subcellularLocation>
        <location evidence="1">Cytoplasm</location>
    </subcellularLocation>
</comment>
<comment type="similarity">
    <text evidence="1">Belongs to the methylthiotransferase family. MiaB subfamily.</text>
</comment>
<dbReference type="EC" id="2.8.4.3" evidence="1"/>
<dbReference type="EMBL" id="CP000580">
    <property type="protein sequence ID" value="ABN97930.1"/>
    <property type="molecule type" value="Genomic_DNA"/>
</dbReference>
<dbReference type="SMR" id="A3PYF3"/>
<dbReference type="KEGG" id="mjl:Mjls_2144"/>
<dbReference type="HOGENOM" id="CLU_018697_2_2_11"/>
<dbReference type="GO" id="GO:0005829">
    <property type="term" value="C:cytosol"/>
    <property type="evidence" value="ECO:0007669"/>
    <property type="project" value="TreeGrafter"/>
</dbReference>
<dbReference type="GO" id="GO:0051539">
    <property type="term" value="F:4 iron, 4 sulfur cluster binding"/>
    <property type="evidence" value="ECO:0007669"/>
    <property type="project" value="UniProtKB-UniRule"/>
</dbReference>
<dbReference type="GO" id="GO:0046872">
    <property type="term" value="F:metal ion binding"/>
    <property type="evidence" value="ECO:0007669"/>
    <property type="project" value="UniProtKB-KW"/>
</dbReference>
<dbReference type="GO" id="GO:0035597">
    <property type="term" value="F:N6-isopentenyladenosine methylthiotransferase activity"/>
    <property type="evidence" value="ECO:0007669"/>
    <property type="project" value="TreeGrafter"/>
</dbReference>
<dbReference type="CDD" id="cd01335">
    <property type="entry name" value="Radical_SAM"/>
    <property type="match status" value="1"/>
</dbReference>
<dbReference type="FunFam" id="3.40.50.12160:FF:000008">
    <property type="entry name" value="tRNA-2-methylthio-N(6)-dimethylallyladenosine synthase"/>
    <property type="match status" value="1"/>
</dbReference>
<dbReference type="FunFam" id="3.80.30.20:FF:000001">
    <property type="entry name" value="tRNA-2-methylthio-N(6)-dimethylallyladenosine synthase 2"/>
    <property type="match status" value="1"/>
</dbReference>
<dbReference type="Gene3D" id="3.40.50.12160">
    <property type="entry name" value="Methylthiotransferase, N-terminal domain"/>
    <property type="match status" value="1"/>
</dbReference>
<dbReference type="Gene3D" id="3.80.30.20">
    <property type="entry name" value="tm_1862 like domain"/>
    <property type="match status" value="1"/>
</dbReference>
<dbReference type="HAMAP" id="MF_01864">
    <property type="entry name" value="tRNA_metthiotr_MiaB"/>
    <property type="match status" value="1"/>
</dbReference>
<dbReference type="InterPro" id="IPR006638">
    <property type="entry name" value="Elp3/MiaA/NifB-like_rSAM"/>
</dbReference>
<dbReference type="InterPro" id="IPR005839">
    <property type="entry name" value="Methylthiotransferase"/>
</dbReference>
<dbReference type="InterPro" id="IPR020612">
    <property type="entry name" value="Methylthiotransferase_CS"/>
</dbReference>
<dbReference type="InterPro" id="IPR013848">
    <property type="entry name" value="Methylthiotransferase_N"/>
</dbReference>
<dbReference type="InterPro" id="IPR038135">
    <property type="entry name" value="Methylthiotransferase_N_sf"/>
</dbReference>
<dbReference type="InterPro" id="IPR006463">
    <property type="entry name" value="MiaB_methiolase"/>
</dbReference>
<dbReference type="InterPro" id="IPR007197">
    <property type="entry name" value="rSAM"/>
</dbReference>
<dbReference type="InterPro" id="IPR023404">
    <property type="entry name" value="rSAM_horseshoe"/>
</dbReference>
<dbReference type="InterPro" id="IPR002792">
    <property type="entry name" value="TRAM_dom"/>
</dbReference>
<dbReference type="NCBIfam" id="TIGR01574">
    <property type="entry name" value="miaB-methiolase"/>
    <property type="match status" value="1"/>
</dbReference>
<dbReference type="NCBIfam" id="TIGR00089">
    <property type="entry name" value="MiaB/RimO family radical SAM methylthiotransferase"/>
    <property type="match status" value="1"/>
</dbReference>
<dbReference type="PANTHER" id="PTHR43020">
    <property type="entry name" value="CDK5 REGULATORY SUBUNIT-ASSOCIATED PROTEIN 1"/>
    <property type="match status" value="1"/>
</dbReference>
<dbReference type="PANTHER" id="PTHR43020:SF2">
    <property type="entry name" value="MITOCHONDRIAL TRNA METHYLTHIOTRANSFERASE CDK5RAP1"/>
    <property type="match status" value="1"/>
</dbReference>
<dbReference type="Pfam" id="PF04055">
    <property type="entry name" value="Radical_SAM"/>
    <property type="match status" value="1"/>
</dbReference>
<dbReference type="Pfam" id="PF00919">
    <property type="entry name" value="UPF0004"/>
    <property type="match status" value="1"/>
</dbReference>
<dbReference type="SFLD" id="SFLDF00273">
    <property type="entry name" value="(dimethylallyl)adenosine_tRNA"/>
    <property type="match status" value="1"/>
</dbReference>
<dbReference type="SFLD" id="SFLDG01082">
    <property type="entry name" value="B12-binding_domain_containing"/>
    <property type="match status" value="1"/>
</dbReference>
<dbReference type="SFLD" id="SFLDG01061">
    <property type="entry name" value="methylthiotransferase"/>
    <property type="match status" value="1"/>
</dbReference>
<dbReference type="SMART" id="SM00729">
    <property type="entry name" value="Elp3"/>
    <property type="match status" value="1"/>
</dbReference>
<dbReference type="SUPFAM" id="SSF102114">
    <property type="entry name" value="Radical SAM enzymes"/>
    <property type="match status" value="1"/>
</dbReference>
<dbReference type="PROSITE" id="PS51449">
    <property type="entry name" value="MTTASE_N"/>
    <property type="match status" value="1"/>
</dbReference>
<dbReference type="PROSITE" id="PS01278">
    <property type="entry name" value="MTTASE_RADICAL"/>
    <property type="match status" value="1"/>
</dbReference>
<dbReference type="PROSITE" id="PS51918">
    <property type="entry name" value="RADICAL_SAM"/>
    <property type="match status" value="1"/>
</dbReference>
<dbReference type="PROSITE" id="PS50926">
    <property type="entry name" value="TRAM"/>
    <property type="match status" value="1"/>
</dbReference>
<gene>
    <name evidence="1" type="primary">miaB</name>
    <name type="ordered locus">Mjls_2144</name>
</gene>
<keyword id="KW-0004">4Fe-4S</keyword>
<keyword id="KW-0963">Cytoplasm</keyword>
<keyword id="KW-0408">Iron</keyword>
<keyword id="KW-0411">Iron-sulfur</keyword>
<keyword id="KW-0479">Metal-binding</keyword>
<keyword id="KW-0949">S-adenosyl-L-methionine</keyword>
<keyword id="KW-0808">Transferase</keyword>
<keyword id="KW-0819">tRNA processing</keyword>
<accession>A3PYF3</accession>
<evidence type="ECO:0000255" key="1">
    <source>
        <dbReference type="HAMAP-Rule" id="MF_01864"/>
    </source>
</evidence>
<evidence type="ECO:0000255" key="2">
    <source>
        <dbReference type="PROSITE-ProRule" id="PRU01266"/>
    </source>
</evidence>
<feature type="chain" id="PRO_0000374391" description="tRNA-2-methylthio-N(6)-dimethylallyladenosine synthase">
    <location>
        <begin position="1"/>
        <end position="526"/>
    </location>
</feature>
<feature type="domain" description="MTTase N-terminal" evidence="1">
    <location>
        <begin position="14"/>
        <end position="130"/>
    </location>
</feature>
<feature type="domain" description="Radical SAM core" evidence="2">
    <location>
        <begin position="153"/>
        <end position="401"/>
    </location>
</feature>
<feature type="domain" description="TRAM" evidence="1">
    <location>
        <begin position="404"/>
        <end position="483"/>
    </location>
</feature>
<feature type="binding site" evidence="1">
    <location>
        <position position="23"/>
    </location>
    <ligand>
        <name>[4Fe-4S] cluster</name>
        <dbReference type="ChEBI" id="CHEBI:49883"/>
        <label>1</label>
    </ligand>
</feature>
<feature type="binding site" evidence="1">
    <location>
        <position position="59"/>
    </location>
    <ligand>
        <name>[4Fe-4S] cluster</name>
        <dbReference type="ChEBI" id="CHEBI:49883"/>
        <label>1</label>
    </ligand>
</feature>
<feature type="binding site" evidence="1">
    <location>
        <position position="93"/>
    </location>
    <ligand>
        <name>[4Fe-4S] cluster</name>
        <dbReference type="ChEBI" id="CHEBI:49883"/>
        <label>1</label>
    </ligand>
</feature>
<feature type="binding site" evidence="1">
    <location>
        <position position="167"/>
    </location>
    <ligand>
        <name>[4Fe-4S] cluster</name>
        <dbReference type="ChEBI" id="CHEBI:49883"/>
        <label>2</label>
        <note>4Fe-4S-S-AdoMet</note>
    </ligand>
</feature>
<feature type="binding site" evidence="1">
    <location>
        <position position="171"/>
    </location>
    <ligand>
        <name>[4Fe-4S] cluster</name>
        <dbReference type="ChEBI" id="CHEBI:49883"/>
        <label>2</label>
        <note>4Fe-4S-S-AdoMet</note>
    </ligand>
</feature>
<feature type="binding site" evidence="1">
    <location>
        <position position="174"/>
    </location>
    <ligand>
        <name>[4Fe-4S] cluster</name>
        <dbReference type="ChEBI" id="CHEBI:49883"/>
        <label>2</label>
        <note>4Fe-4S-S-AdoMet</note>
    </ligand>
</feature>
<name>MIAB_MYCSJ</name>
<reference key="1">
    <citation type="submission" date="2007-02" db="EMBL/GenBank/DDBJ databases">
        <title>Complete sequence of Mycobacterium sp. JLS.</title>
        <authorList>
            <consortium name="US DOE Joint Genome Institute"/>
            <person name="Copeland A."/>
            <person name="Lucas S."/>
            <person name="Lapidus A."/>
            <person name="Barry K."/>
            <person name="Detter J.C."/>
            <person name="Glavina del Rio T."/>
            <person name="Hammon N."/>
            <person name="Israni S."/>
            <person name="Dalin E."/>
            <person name="Tice H."/>
            <person name="Pitluck S."/>
            <person name="Chain P."/>
            <person name="Malfatti S."/>
            <person name="Shin M."/>
            <person name="Vergez L."/>
            <person name="Schmutz J."/>
            <person name="Larimer F."/>
            <person name="Land M."/>
            <person name="Hauser L."/>
            <person name="Kyrpides N."/>
            <person name="Mikhailova N."/>
            <person name="Miller C.D."/>
            <person name="Anderson A.J."/>
            <person name="Sims R.C."/>
            <person name="Richardson P."/>
        </authorList>
    </citation>
    <scope>NUCLEOTIDE SEQUENCE [LARGE SCALE GENOMIC DNA]</scope>
    <source>
        <strain>JLS</strain>
    </source>
</reference>
<organism>
    <name type="scientific">Mycobacterium sp. (strain JLS)</name>
    <dbReference type="NCBI Taxonomy" id="164757"/>
    <lineage>
        <taxon>Bacteria</taxon>
        <taxon>Bacillati</taxon>
        <taxon>Actinomycetota</taxon>
        <taxon>Actinomycetes</taxon>
        <taxon>Mycobacteriales</taxon>
        <taxon>Mycobacteriaceae</taxon>
        <taxon>Mycobacterium</taxon>
    </lineage>
</organism>